<accession>A9ADF2</accession>
<comment type="function">
    <text evidence="1">Catalyzes the reversible formation of acyl-phosphate (acyl-PO(4)) from acyl-[acyl-carrier-protein] (acyl-ACP). This enzyme utilizes acyl-ACP as fatty acyl donor, but not acyl-CoA.</text>
</comment>
<comment type="catalytic activity">
    <reaction evidence="1">
        <text>a fatty acyl-[ACP] + phosphate = an acyl phosphate + holo-[ACP]</text>
        <dbReference type="Rhea" id="RHEA:42292"/>
        <dbReference type="Rhea" id="RHEA-COMP:9685"/>
        <dbReference type="Rhea" id="RHEA-COMP:14125"/>
        <dbReference type="ChEBI" id="CHEBI:43474"/>
        <dbReference type="ChEBI" id="CHEBI:59918"/>
        <dbReference type="ChEBI" id="CHEBI:64479"/>
        <dbReference type="ChEBI" id="CHEBI:138651"/>
        <dbReference type="EC" id="2.3.1.274"/>
    </reaction>
</comment>
<comment type="pathway">
    <text evidence="1">Lipid metabolism; phospholipid metabolism.</text>
</comment>
<comment type="subunit">
    <text evidence="1">Homodimer. Probably interacts with PlsY.</text>
</comment>
<comment type="subcellular location">
    <subcellularLocation>
        <location evidence="1">Cytoplasm</location>
    </subcellularLocation>
    <text evidence="1">Associated with the membrane possibly through PlsY.</text>
</comment>
<comment type="similarity">
    <text evidence="1">Belongs to the PlsX family.</text>
</comment>
<proteinExistence type="inferred from homology"/>
<sequence>MTVKLTIDCMGGDHGPSVTVPAAVKFVRAHPDAHLMLVGIESAIRAQLKKLKALDDPALSIVPATEVVAMDDPVEVALRKKKDSSMRVALNHVKDGEAQACISAGNTGALMAVSRYVLKTLPGIERPAIAFSLPNPTGYTMMLDLGANVDCEPQHLLQFAEMGHALVAALEGKDRPTIGLLNIGEEVIKGNETIKRAGELLRASTLNFRGNVEGNDIYKGTVDVIVCDGFVGNVALKTSEGLAQMLSDIIREEFGRSLLSKLMALLALPVLMRFKKRVDHRQYNGAALLGLKSLVIKSHGSADAYAFEWAIKRGYDAVKNGVLERLTRAMADNSVSLGDGEHDAGGAGPASPAAGHHAEPSAAQSSKA</sequence>
<organism>
    <name type="scientific">Burkholderia multivorans (strain ATCC 17616 / 249)</name>
    <dbReference type="NCBI Taxonomy" id="395019"/>
    <lineage>
        <taxon>Bacteria</taxon>
        <taxon>Pseudomonadati</taxon>
        <taxon>Pseudomonadota</taxon>
        <taxon>Betaproteobacteria</taxon>
        <taxon>Burkholderiales</taxon>
        <taxon>Burkholderiaceae</taxon>
        <taxon>Burkholderia</taxon>
        <taxon>Burkholderia cepacia complex</taxon>
    </lineage>
</organism>
<name>PLSX_BURM1</name>
<feature type="chain" id="PRO_1000089884" description="Phosphate acyltransferase">
    <location>
        <begin position="1"/>
        <end position="368"/>
    </location>
</feature>
<feature type="region of interest" description="Disordered" evidence="2">
    <location>
        <begin position="335"/>
        <end position="368"/>
    </location>
</feature>
<feature type="compositionally biased region" description="Low complexity" evidence="2">
    <location>
        <begin position="349"/>
        <end position="368"/>
    </location>
</feature>
<keyword id="KW-0963">Cytoplasm</keyword>
<keyword id="KW-0444">Lipid biosynthesis</keyword>
<keyword id="KW-0443">Lipid metabolism</keyword>
<keyword id="KW-0594">Phospholipid biosynthesis</keyword>
<keyword id="KW-1208">Phospholipid metabolism</keyword>
<keyword id="KW-1185">Reference proteome</keyword>
<keyword id="KW-0808">Transferase</keyword>
<protein>
    <recommendedName>
        <fullName evidence="1">Phosphate acyltransferase</fullName>
        <ecNumber evidence="1">2.3.1.274</ecNumber>
    </recommendedName>
    <alternativeName>
        <fullName evidence="1">Acyl-ACP phosphotransacylase</fullName>
    </alternativeName>
    <alternativeName>
        <fullName evidence="1">Acyl-[acyl-carrier-protein]--phosphate acyltransferase</fullName>
    </alternativeName>
    <alternativeName>
        <fullName evidence="1">Phosphate-acyl-ACP acyltransferase</fullName>
    </alternativeName>
</protein>
<gene>
    <name evidence="1" type="primary">plsX</name>
    <name type="ordered locus">Bmul_2184</name>
    <name type="ordered locus">BMULJ_01057</name>
</gene>
<evidence type="ECO:0000255" key="1">
    <source>
        <dbReference type="HAMAP-Rule" id="MF_00019"/>
    </source>
</evidence>
<evidence type="ECO:0000256" key="2">
    <source>
        <dbReference type="SAM" id="MobiDB-lite"/>
    </source>
</evidence>
<dbReference type="EC" id="2.3.1.274" evidence="1"/>
<dbReference type="EMBL" id="CP000868">
    <property type="protein sequence ID" value="ABX15869.1"/>
    <property type="molecule type" value="Genomic_DNA"/>
</dbReference>
<dbReference type="EMBL" id="AP009385">
    <property type="protein sequence ID" value="BAG43001.1"/>
    <property type="molecule type" value="Genomic_DNA"/>
</dbReference>
<dbReference type="RefSeq" id="WP_006408136.1">
    <property type="nucleotide sequence ID" value="NC_010084.1"/>
</dbReference>
<dbReference type="SMR" id="A9ADF2"/>
<dbReference type="STRING" id="395019.BMULJ_01057"/>
<dbReference type="GeneID" id="89569417"/>
<dbReference type="KEGG" id="bmj:BMULJ_01057"/>
<dbReference type="KEGG" id="bmu:Bmul_2184"/>
<dbReference type="eggNOG" id="COG0416">
    <property type="taxonomic scope" value="Bacteria"/>
</dbReference>
<dbReference type="HOGENOM" id="CLU_039379_1_0_4"/>
<dbReference type="UniPathway" id="UPA00085"/>
<dbReference type="Proteomes" id="UP000008815">
    <property type="component" value="Chromosome 1"/>
</dbReference>
<dbReference type="GO" id="GO:0005737">
    <property type="term" value="C:cytoplasm"/>
    <property type="evidence" value="ECO:0007669"/>
    <property type="project" value="UniProtKB-SubCell"/>
</dbReference>
<dbReference type="GO" id="GO:0043811">
    <property type="term" value="F:phosphate:acyl-[acyl carrier protein] acyltransferase activity"/>
    <property type="evidence" value="ECO:0007669"/>
    <property type="project" value="UniProtKB-UniRule"/>
</dbReference>
<dbReference type="GO" id="GO:0006633">
    <property type="term" value="P:fatty acid biosynthetic process"/>
    <property type="evidence" value="ECO:0007669"/>
    <property type="project" value="UniProtKB-UniRule"/>
</dbReference>
<dbReference type="GO" id="GO:0008654">
    <property type="term" value="P:phospholipid biosynthetic process"/>
    <property type="evidence" value="ECO:0007669"/>
    <property type="project" value="UniProtKB-KW"/>
</dbReference>
<dbReference type="Gene3D" id="3.40.718.10">
    <property type="entry name" value="Isopropylmalate Dehydrogenase"/>
    <property type="match status" value="1"/>
</dbReference>
<dbReference type="HAMAP" id="MF_00019">
    <property type="entry name" value="PlsX"/>
    <property type="match status" value="1"/>
</dbReference>
<dbReference type="InterPro" id="IPR003664">
    <property type="entry name" value="FA_synthesis"/>
</dbReference>
<dbReference type="InterPro" id="IPR012281">
    <property type="entry name" value="Phospholipid_synth_PlsX-like"/>
</dbReference>
<dbReference type="NCBIfam" id="TIGR00182">
    <property type="entry name" value="plsX"/>
    <property type="match status" value="1"/>
</dbReference>
<dbReference type="PANTHER" id="PTHR30100">
    <property type="entry name" value="FATTY ACID/PHOSPHOLIPID SYNTHESIS PROTEIN PLSX"/>
    <property type="match status" value="1"/>
</dbReference>
<dbReference type="PANTHER" id="PTHR30100:SF1">
    <property type="entry name" value="PHOSPHATE ACYLTRANSFERASE"/>
    <property type="match status" value="1"/>
</dbReference>
<dbReference type="Pfam" id="PF02504">
    <property type="entry name" value="FA_synthesis"/>
    <property type="match status" value="1"/>
</dbReference>
<dbReference type="PIRSF" id="PIRSF002465">
    <property type="entry name" value="Phsphlp_syn_PlsX"/>
    <property type="match status" value="1"/>
</dbReference>
<dbReference type="SUPFAM" id="SSF53659">
    <property type="entry name" value="Isocitrate/Isopropylmalate dehydrogenase-like"/>
    <property type="match status" value="1"/>
</dbReference>
<reference key="1">
    <citation type="submission" date="2007-10" db="EMBL/GenBank/DDBJ databases">
        <title>Complete sequence of chromosome 1 of Burkholderia multivorans ATCC 17616.</title>
        <authorList>
            <person name="Copeland A."/>
            <person name="Lucas S."/>
            <person name="Lapidus A."/>
            <person name="Barry K."/>
            <person name="Glavina del Rio T."/>
            <person name="Dalin E."/>
            <person name="Tice H."/>
            <person name="Pitluck S."/>
            <person name="Chain P."/>
            <person name="Malfatti S."/>
            <person name="Shin M."/>
            <person name="Vergez L."/>
            <person name="Schmutz J."/>
            <person name="Larimer F."/>
            <person name="Land M."/>
            <person name="Hauser L."/>
            <person name="Kyrpides N."/>
            <person name="Kim E."/>
            <person name="Tiedje J."/>
            <person name="Richardson P."/>
        </authorList>
    </citation>
    <scope>NUCLEOTIDE SEQUENCE [LARGE SCALE GENOMIC DNA]</scope>
    <source>
        <strain>ATCC 17616 / 249</strain>
    </source>
</reference>
<reference key="2">
    <citation type="submission" date="2007-04" db="EMBL/GenBank/DDBJ databases">
        <title>Complete genome sequence of Burkholderia multivorans ATCC 17616.</title>
        <authorList>
            <person name="Ohtsubo Y."/>
            <person name="Yamashita A."/>
            <person name="Kurokawa K."/>
            <person name="Takami H."/>
            <person name="Yuhara S."/>
            <person name="Nishiyama E."/>
            <person name="Endo R."/>
            <person name="Miyazaki R."/>
            <person name="Ono A."/>
            <person name="Yano K."/>
            <person name="Ito M."/>
            <person name="Sota M."/>
            <person name="Yuji N."/>
            <person name="Hattori M."/>
            <person name="Tsuda M."/>
        </authorList>
    </citation>
    <scope>NUCLEOTIDE SEQUENCE [LARGE SCALE GENOMIC DNA]</scope>
    <source>
        <strain>ATCC 17616 / 249</strain>
    </source>
</reference>